<gene>
    <name evidence="1" type="primary">rps27ae</name>
    <name type="ordered locus">TGAM_0503</name>
</gene>
<proteinExistence type="inferred from homology"/>
<feature type="chain" id="PRO_1000212919" description="Small ribosomal subunit protein eS31">
    <location>
        <begin position="1"/>
        <end position="56"/>
    </location>
</feature>
<feature type="zinc finger region" description="C4-type" evidence="1">
    <location>
        <begin position="28"/>
        <end position="49"/>
    </location>
</feature>
<feature type="binding site" evidence="1">
    <location>
        <position position="28"/>
    </location>
    <ligand>
        <name>Zn(2+)</name>
        <dbReference type="ChEBI" id="CHEBI:29105"/>
    </ligand>
</feature>
<feature type="binding site" evidence="1">
    <location>
        <position position="31"/>
    </location>
    <ligand>
        <name>Zn(2+)</name>
        <dbReference type="ChEBI" id="CHEBI:29105"/>
    </ligand>
</feature>
<feature type="binding site" evidence="1">
    <location>
        <position position="46"/>
    </location>
    <ligand>
        <name>Zn(2+)</name>
        <dbReference type="ChEBI" id="CHEBI:29105"/>
    </ligand>
</feature>
<feature type="binding site" evidence="1">
    <location>
        <position position="49"/>
    </location>
    <ligand>
        <name>Zn(2+)</name>
        <dbReference type="ChEBI" id="CHEBI:29105"/>
    </ligand>
</feature>
<keyword id="KW-0479">Metal-binding</keyword>
<keyword id="KW-1185">Reference proteome</keyword>
<keyword id="KW-0687">Ribonucleoprotein</keyword>
<keyword id="KW-0689">Ribosomal protein</keyword>
<keyword id="KW-0862">Zinc</keyword>
<keyword id="KW-0863">Zinc-finger</keyword>
<protein>
    <recommendedName>
        <fullName evidence="1">Small ribosomal subunit protein eS31</fullName>
    </recommendedName>
    <alternativeName>
        <fullName evidence="2">30S ribosomal protein S27ae</fullName>
    </alternativeName>
</protein>
<dbReference type="EMBL" id="CP001398">
    <property type="protein sequence ID" value="ACS33005.1"/>
    <property type="molecule type" value="Genomic_DNA"/>
</dbReference>
<dbReference type="RefSeq" id="WP_015858123.1">
    <property type="nucleotide sequence ID" value="NC_012804.1"/>
</dbReference>
<dbReference type="SMR" id="C5A443"/>
<dbReference type="STRING" id="593117.TGAM_0503"/>
<dbReference type="PaxDb" id="593117-TGAM_0503"/>
<dbReference type="GeneID" id="7987371"/>
<dbReference type="KEGG" id="tga:TGAM_0503"/>
<dbReference type="PATRIC" id="fig|593117.10.peg.498"/>
<dbReference type="eggNOG" id="arCOG04183">
    <property type="taxonomic scope" value="Archaea"/>
</dbReference>
<dbReference type="HOGENOM" id="CLU_179743_2_0_2"/>
<dbReference type="OrthoDB" id="25142at2157"/>
<dbReference type="Proteomes" id="UP000001488">
    <property type="component" value="Chromosome"/>
</dbReference>
<dbReference type="GO" id="GO:1990904">
    <property type="term" value="C:ribonucleoprotein complex"/>
    <property type="evidence" value="ECO:0007669"/>
    <property type="project" value="UniProtKB-KW"/>
</dbReference>
<dbReference type="GO" id="GO:0005840">
    <property type="term" value="C:ribosome"/>
    <property type="evidence" value="ECO:0007669"/>
    <property type="project" value="UniProtKB-KW"/>
</dbReference>
<dbReference type="GO" id="GO:0003735">
    <property type="term" value="F:structural constituent of ribosome"/>
    <property type="evidence" value="ECO:0007669"/>
    <property type="project" value="InterPro"/>
</dbReference>
<dbReference type="GO" id="GO:0008270">
    <property type="term" value="F:zinc ion binding"/>
    <property type="evidence" value="ECO:0007669"/>
    <property type="project" value="UniProtKB-UniRule"/>
</dbReference>
<dbReference type="GO" id="GO:0006412">
    <property type="term" value="P:translation"/>
    <property type="evidence" value="ECO:0007669"/>
    <property type="project" value="UniProtKB-UniRule"/>
</dbReference>
<dbReference type="Gene3D" id="6.20.50.150">
    <property type="match status" value="1"/>
</dbReference>
<dbReference type="HAMAP" id="MF_00777">
    <property type="entry name" value="Ribosomal_eS31"/>
    <property type="match status" value="1"/>
</dbReference>
<dbReference type="InterPro" id="IPR002906">
    <property type="entry name" value="Ribosomal_eS31"/>
</dbReference>
<dbReference type="InterPro" id="IPR022845">
    <property type="entry name" value="Ribosomal_eS31_arc"/>
</dbReference>
<dbReference type="InterPro" id="IPR038582">
    <property type="entry name" value="Ribosomal_eS31_euk-type_sf"/>
</dbReference>
<dbReference type="InterPro" id="IPR011332">
    <property type="entry name" value="Ribosomal_zn-bd"/>
</dbReference>
<dbReference type="NCBIfam" id="NF001669">
    <property type="entry name" value="PRK00432.1"/>
    <property type="match status" value="1"/>
</dbReference>
<dbReference type="Pfam" id="PF01599">
    <property type="entry name" value="Ribosomal_S27"/>
    <property type="match status" value="1"/>
</dbReference>
<dbReference type="SMART" id="SM01402">
    <property type="entry name" value="Ribosomal_S27"/>
    <property type="match status" value="1"/>
</dbReference>
<dbReference type="SUPFAM" id="SSF57829">
    <property type="entry name" value="Zn-binding ribosomal proteins"/>
    <property type="match status" value="1"/>
</dbReference>
<organism>
    <name type="scientific">Thermococcus gammatolerans (strain DSM 15229 / JCM 11827 / EJ3)</name>
    <dbReference type="NCBI Taxonomy" id="593117"/>
    <lineage>
        <taxon>Archaea</taxon>
        <taxon>Methanobacteriati</taxon>
        <taxon>Methanobacteriota</taxon>
        <taxon>Thermococci</taxon>
        <taxon>Thermococcales</taxon>
        <taxon>Thermococcaceae</taxon>
        <taxon>Thermococcus</taxon>
    </lineage>
</organism>
<name>RS27A_THEGJ</name>
<evidence type="ECO:0000255" key="1">
    <source>
        <dbReference type="HAMAP-Rule" id="MF_00777"/>
    </source>
</evidence>
<evidence type="ECO:0000305" key="2"/>
<sequence length="56" mass="6595">MAKKKKTSQKWKLYEVKGGKVVRKNKFCPRCGPGVFMANHKDRWSCGRCGYTEWKK</sequence>
<accession>C5A443</accession>
<comment type="cofactor">
    <cofactor evidence="1">
        <name>Zn(2+)</name>
        <dbReference type="ChEBI" id="CHEBI:29105"/>
    </cofactor>
    <text evidence="1">Binds 1 zinc ion per subunit.</text>
</comment>
<comment type="subunit">
    <text evidence="1">Part of the 30S ribosomal subunit.</text>
</comment>
<comment type="similarity">
    <text evidence="1">Belongs to the eukaryotic ribosomal protein eS31 family.</text>
</comment>
<reference key="1">
    <citation type="journal article" date="2007" name="Genome Biol.">
        <title>Genome analysis and genome-wide proteomics of Thermococcus gammatolerans, the most radioresistant organism known amongst the Archaea.</title>
        <authorList>
            <person name="Zivanovic Y."/>
            <person name="Armengaud J."/>
            <person name="Lagorce A."/>
            <person name="Leplat C."/>
            <person name="Guerin P."/>
            <person name="Dutertre M."/>
            <person name="Anthouard V."/>
            <person name="Forterre P."/>
            <person name="Wincker P."/>
            <person name="Confalonieri F."/>
        </authorList>
    </citation>
    <scope>NUCLEOTIDE SEQUENCE [LARGE SCALE GENOMIC DNA]</scope>
    <source>
        <strain>DSM 15229 / JCM 11827 / EJ3</strain>
    </source>
</reference>